<proteinExistence type="inferred from homology"/>
<organism>
    <name type="scientific">Oryza sativa subsp. indica</name>
    <name type="common">Rice</name>
    <dbReference type="NCBI Taxonomy" id="39946"/>
    <lineage>
        <taxon>Eukaryota</taxon>
        <taxon>Viridiplantae</taxon>
        <taxon>Streptophyta</taxon>
        <taxon>Embryophyta</taxon>
        <taxon>Tracheophyta</taxon>
        <taxon>Spermatophyta</taxon>
        <taxon>Magnoliopsida</taxon>
        <taxon>Liliopsida</taxon>
        <taxon>Poales</taxon>
        <taxon>Poaceae</taxon>
        <taxon>BOP clade</taxon>
        <taxon>Oryzoideae</taxon>
        <taxon>Oryzeae</taxon>
        <taxon>Oryzinae</taxon>
        <taxon>Oryza</taxon>
        <taxon>Oryza sativa</taxon>
    </lineage>
</organism>
<accession>B8B350</accession>
<comment type="function">
    <text evidence="1">Sugar transporter involved in the transport of CMP-sialic acid from the cytoplasm into the Golgi. May transport important nucleotide sugars such as CMP-Kdo (2-keto-3-deoxy-D-manno-octulosonic acid) in physiological conditions.</text>
</comment>
<comment type="subcellular location">
    <subcellularLocation>
        <location evidence="3">Golgi apparatus membrane</location>
        <topology evidence="3">Multi-pass membrane protein</topology>
    </subcellularLocation>
</comment>
<comment type="similarity">
    <text evidence="3">Belongs to the nucleotide-sugar transporter family. CMP-Sialate:CMP antiporter (TC 2.A.7.12) subfamily.</text>
</comment>
<name>CSTR1_ORYSI</name>
<evidence type="ECO:0000250" key="1">
    <source>
        <dbReference type="UniProtKB" id="Q654D9"/>
    </source>
</evidence>
<evidence type="ECO:0000255" key="2"/>
<evidence type="ECO:0000305" key="3"/>
<evidence type="ECO:0000312" key="4">
    <source>
        <dbReference type="EMBL" id="EEC80726.1"/>
    </source>
</evidence>
<evidence type="ECO:0000312" key="5">
    <source>
        <dbReference type="Proteomes" id="UP000007015"/>
    </source>
</evidence>
<reference key="1">
    <citation type="journal article" date="2002" name="Nature">
        <title>Sequence and analysis of rice chromosome 4.</title>
        <authorList>
            <person name="Feng Q."/>
            <person name="Zhang Y."/>
            <person name="Hao P."/>
            <person name="Wang S."/>
            <person name="Fu G."/>
            <person name="Huang Y."/>
            <person name="Li Y."/>
            <person name="Zhu J."/>
            <person name="Liu Y."/>
            <person name="Hu X."/>
            <person name="Jia P."/>
            <person name="Zhang Y."/>
            <person name="Zhao Q."/>
            <person name="Ying K."/>
            <person name="Yu S."/>
            <person name="Tang Y."/>
            <person name="Weng Q."/>
            <person name="Zhang L."/>
            <person name="Lu Y."/>
            <person name="Mu J."/>
            <person name="Lu Y."/>
            <person name="Zhang L.S."/>
            <person name="Yu Z."/>
            <person name="Fan D."/>
            <person name="Liu X."/>
            <person name="Lu T."/>
            <person name="Li C."/>
            <person name="Wu Y."/>
            <person name="Sun T."/>
            <person name="Lei H."/>
            <person name="Li T."/>
            <person name="Hu H."/>
            <person name="Guan J."/>
            <person name="Wu M."/>
            <person name="Zhang R."/>
            <person name="Zhou B."/>
            <person name="Chen Z."/>
            <person name="Chen L."/>
            <person name="Jin Z."/>
            <person name="Wang R."/>
            <person name="Yin H."/>
            <person name="Cai Z."/>
            <person name="Ren S."/>
            <person name="Lv G."/>
            <person name="Gu W."/>
            <person name="Zhu G."/>
            <person name="Tu Y."/>
            <person name="Jia J."/>
            <person name="Zhang Y."/>
            <person name="Chen J."/>
            <person name="Kang H."/>
            <person name="Chen X."/>
            <person name="Shao C."/>
            <person name="Sun Y."/>
            <person name="Hu Q."/>
            <person name="Zhang X."/>
            <person name="Zhang W."/>
            <person name="Wang L."/>
            <person name="Ding C."/>
            <person name="Sheng H."/>
            <person name="Gu J."/>
            <person name="Chen S."/>
            <person name="Ni L."/>
            <person name="Zhu F."/>
            <person name="Chen W."/>
            <person name="Lan L."/>
            <person name="Lai Y."/>
            <person name="Cheng Z."/>
            <person name="Gu M."/>
            <person name="Jiang J."/>
            <person name="Li J."/>
            <person name="Hong G."/>
            <person name="Xue Y."/>
            <person name="Han B."/>
        </authorList>
    </citation>
    <scope>NUCLEOTIDE SEQUENCE [LARGE SCALE GENOMIC DNA]</scope>
    <source>
        <strain evidence="5">cv. 93-11</strain>
        <strain>cv. Guang-Lu-Ai No.4</strain>
    </source>
</reference>
<feature type="chain" id="PRO_0000434338" description="CMP-sialic acid transporter 1">
    <location>
        <begin position="1"/>
        <end position="322"/>
    </location>
</feature>
<feature type="topological domain" description="Cytoplasmic" evidence="3">
    <location>
        <begin position="1"/>
        <end position="2"/>
    </location>
</feature>
<feature type="transmembrane region" description="Helical" evidence="2">
    <location>
        <begin position="3"/>
        <end position="23"/>
    </location>
</feature>
<feature type="topological domain" description="Lumenal" evidence="3">
    <location>
        <begin position="24"/>
        <end position="33"/>
    </location>
</feature>
<feature type="transmembrane region" description="Helical" evidence="2">
    <location>
        <begin position="34"/>
        <end position="54"/>
    </location>
</feature>
<feature type="topological domain" description="Cytoplasmic" evidence="3">
    <location>
        <begin position="55"/>
        <end position="75"/>
    </location>
</feature>
<feature type="transmembrane region" description="Helical" evidence="2">
    <location>
        <begin position="76"/>
        <end position="96"/>
    </location>
</feature>
<feature type="topological domain" description="Lumenal" evidence="3">
    <location>
        <begin position="97"/>
        <end position="100"/>
    </location>
</feature>
<feature type="transmembrane region" description="Helical" evidence="2">
    <location>
        <begin position="101"/>
        <end position="120"/>
    </location>
</feature>
<feature type="topological domain" description="Cytoplasmic" evidence="3">
    <location>
        <begin position="121"/>
        <end position="126"/>
    </location>
</feature>
<feature type="transmembrane region" description="Helical" evidence="2">
    <location>
        <begin position="127"/>
        <end position="144"/>
    </location>
</feature>
<feature type="topological domain" description="Lumenal" evidence="3">
    <location>
        <begin position="145"/>
        <end position="157"/>
    </location>
</feature>
<feature type="transmembrane region" description="Helical" evidence="2">
    <location>
        <begin position="158"/>
        <end position="178"/>
    </location>
</feature>
<feature type="topological domain" description="Cytoplasmic" evidence="3">
    <location>
        <begin position="179"/>
        <end position="198"/>
    </location>
</feature>
<feature type="transmembrane region" description="Helical" evidence="2">
    <location>
        <begin position="199"/>
        <end position="219"/>
    </location>
</feature>
<feature type="topological domain" description="Lumenal" evidence="3">
    <location>
        <begin position="220"/>
        <end position="233"/>
    </location>
</feature>
<feature type="transmembrane region" description="Helical" evidence="2">
    <location>
        <begin position="234"/>
        <end position="254"/>
    </location>
</feature>
<feature type="topological domain" description="Cytoplasmic" evidence="3">
    <location>
        <begin position="255"/>
        <end position="262"/>
    </location>
</feature>
<feature type="transmembrane region" description="Helical" evidence="2">
    <location>
        <begin position="263"/>
        <end position="283"/>
    </location>
</feature>
<feature type="topological domain" description="Lumenal" evidence="3">
    <location>
        <begin position="284"/>
        <end position="286"/>
    </location>
</feature>
<dbReference type="EMBL" id="CM000131">
    <property type="protein sequence ID" value="EEC80726.1"/>
    <property type="molecule type" value="Genomic_DNA"/>
</dbReference>
<dbReference type="SMR" id="B8B350"/>
<dbReference type="STRING" id="39946.B8B350"/>
<dbReference type="EnsemblPlants" id="BGIOSGA021135-TA">
    <property type="protein sequence ID" value="BGIOSGA021135-PA"/>
    <property type="gene ID" value="BGIOSGA021135"/>
</dbReference>
<dbReference type="Gramene" id="BGIOSGA021135-TA">
    <property type="protein sequence ID" value="BGIOSGA021135-PA"/>
    <property type="gene ID" value="BGIOSGA021135"/>
</dbReference>
<dbReference type="HOGENOM" id="CLU_024645_5_1_1"/>
<dbReference type="OMA" id="IEEDMMT"/>
<dbReference type="Proteomes" id="UP000007015">
    <property type="component" value="Chromosome 6"/>
</dbReference>
<dbReference type="GO" id="GO:0000139">
    <property type="term" value="C:Golgi membrane"/>
    <property type="evidence" value="ECO:0007669"/>
    <property type="project" value="UniProtKB-SubCell"/>
</dbReference>
<dbReference type="GO" id="GO:0015165">
    <property type="term" value="F:pyrimidine nucleotide-sugar transmembrane transporter activity"/>
    <property type="evidence" value="ECO:0007669"/>
    <property type="project" value="InterPro"/>
</dbReference>
<dbReference type="GO" id="GO:0015136">
    <property type="term" value="F:sialic acid transmembrane transporter activity"/>
    <property type="evidence" value="ECO:0007669"/>
    <property type="project" value="EnsemblPlants"/>
</dbReference>
<dbReference type="InterPro" id="IPR007271">
    <property type="entry name" value="Nuc_sug_transpt"/>
</dbReference>
<dbReference type="NCBIfam" id="TIGR00803">
    <property type="entry name" value="nst"/>
    <property type="match status" value="1"/>
</dbReference>
<dbReference type="PANTHER" id="PTHR10231">
    <property type="entry name" value="NUCLEOTIDE-SUGAR TRANSMEMBRANE TRANSPORTER"/>
    <property type="match status" value="1"/>
</dbReference>
<dbReference type="Pfam" id="PF04142">
    <property type="entry name" value="Nuc_sug_transp"/>
    <property type="match status" value="1"/>
</dbReference>
<dbReference type="PIRSF" id="PIRSF005799">
    <property type="entry name" value="UDP-gal_transpt"/>
    <property type="match status" value="1"/>
</dbReference>
<dbReference type="SUPFAM" id="SSF103481">
    <property type="entry name" value="Multidrug resistance efflux transporter EmrE"/>
    <property type="match status" value="1"/>
</dbReference>
<sequence>MQWYLVAALLTVLTSSQGILTTLSQSNGKYKYDYATIPFLAELFKLSFSSFFLWKECQSSSPPRMTKEWRSIRLYLVPSVIYLIHNNVQFATLTYVDPSTYQIMGNLKIVTTGILFRLVLKRKLSNLQWMAVVLLAVGTTTSQVKGCGDAPCDSLFSAPFQGYMLGILSACLSALAGVYTEYLMKKNNDSLYWQNVQLYTFGVIFNMGWLIYGDFKAGFERGPWWQRLFNGYSITTWMVVFNLGSTGLLVSWLMKYSDNIVKVYSTSMGMLLTMVLSVYLFNVRATLQLFLGIVICIISLQMYFMPVNMLVELPQALPVTSK</sequence>
<gene>
    <name evidence="3" type="primary">CSTLP1</name>
    <name evidence="4" type="ORF">OsI_23192</name>
</gene>
<keyword id="KW-0333">Golgi apparatus</keyword>
<keyword id="KW-0472">Membrane</keyword>
<keyword id="KW-1185">Reference proteome</keyword>
<keyword id="KW-0762">Sugar transport</keyword>
<keyword id="KW-0812">Transmembrane</keyword>
<keyword id="KW-1133">Transmembrane helix</keyword>
<keyword id="KW-0813">Transport</keyword>
<protein>
    <recommendedName>
        <fullName evidence="3">CMP-sialic acid transporter 1</fullName>
        <shortName evidence="3">CMP-SA-Tr 1</shortName>
        <shortName evidence="3">CMP-Sia-Tr 1</shortName>
    </recommendedName>
    <alternativeName>
        <fullName evidence="3">CMP-sialic acid transporter-like protein 1</fullName>
    </alternativeName>
</protein>